<name>HBB_BRACA</name>
<organism>
    <name type="scientific">Branta canadensis</name>
    <name type="common">Canada goose</name>
    <name type="synonym">Anas canadensis</name>
    <dbReference type="NCBI Taxonomy" id="8853"/>
    <lineage>
        <taxon>Eukaryota</taxon>
        <taxon>Metazoa</taxon>
        <taxon>Chordata</taxon>
        <taxon>Craniata</taxon>
        <taxon>Vertebrata</taxon>
        <taxon>Euteleostomi</taxon>
        <taxon>Archelosauria</taxon>
        <taxon>Archosauria</taxon>
        <taxon>Dinosauria</taxon>
        <taxon>Saurischia</taxon>
        <taxon>Theropoda</taxon>
        <taxon>Coelurosauria</taxon>
        <taxon>Aves</taxon>
        <taxon>Neognathae</taxon>
        <taxon>Galloanserae</taxon>
        <taxon>Anseriformes</taxon>
        <taxon>Anatidae</taxon>
        <taxon>Anserinae</taxon>
        <taxon>Branta</taxon>
    </lineage>
</organism>
<accession>P68944</accession>
<accession>P02119</accession>
<dbReference type="PIR" id="A02439">
    <property type="entry name" value="HBGSC"/>
</dbReference>
<dbReference type="SMR" id="P68944"/>
<dbReference type="GO" id="GO:0072562">
    <property type="term" value="C:blood microparticle"/>
    <property type="evidence" value="ECO:0007669"/>
    <property type="project" value="TreeGrafter"/>
</dbReference>
<dbReference type="GO" id="GO:0031838">
    <property type="term" value="C:haptoglobin-hemoglobin complex"/>
    <property type="evidence" value="ECO:0007669"/>
    <property type="project" value="TreeGrafter"/>
</dbReference>
<dbReference type="GO" id="GO:0005833">
    <property type="term" value="C:hemoglobin complex"/>
    <property type="evidence" value="ECO:0007669"/>
    <property type="project" value="InterPro"/>
</dbReference>
<dbReference type="GO" id="GO:0031720">
    <property type="term" value="F:haptoglobin binding"/>
    <property type="evidence" value="ECO:0007669"/>
    <property type="project" value="TreeGrafter"/>
</dbReference>
<dbReference type="GO" id="GO:0020037">
    <property type="term" value="F:heme binding"/>
    <property type="evidence" value="ECO:0007669"/>
    <property type="project" value="InterPro"/>
</dbReference>
<dbReference type="GO" id="GO:0046872">
    <property type="term" value="F:metal ion binding"/>
    <property type="evidence" value="ECO:0007669"/>
    <property type="project" value="UniProtKB-KW"/>
</dbReference>
<dbReference type="GO" id="GO:0043177">
    <property type="term" value="F:organic acid binding"/>
    <property type="evidence" value="ECO:0007669"/>
    <property type="project" value="TreeGrafter"/>
</dbReference>
<dbReference type="GO" id="GO:0019825">
    <property type="term" value="F:oxygen binding"/>
    <property type="evidence" value="ECO:0007669"/>
    <property type="project" value="InterPro"/>
</dbReference>
<dbReference type="GO" id="GO:0005344">
    <property type="term" value="F:oxygen carrier activity"/>
    <property type="evidence" value="ECO:0007669"/>
    <property type="project" value="UniProtKB-KW"/>
</dbReference>
<dbReference type="GO" id="GO:0004601">
    <property type="term" value="F:peroxidase activity"/>
    <property type="evidence" value="ECO:0007669"/>
    <property type="project" value="TreeGrafter"/>
</dbReference>
<dbReference type="GO" id="GO:0042744">
    <property type="term" value="P:hydrogen peroxide catabolic process"/>
    <property type="evidence" value="ECO:0007669"/>
    <property type="project" value="TreeGrafter"/>
</dbReference>
<dbReference type="CDD" id="cd08925">
    <property type="entry name" value="Hb-beta-like"/>
    <property type="match status" value="1"/>
</dbReference>
<dbReference type="FunFam" id="1.10.490.10:FF:000001">
    <property type="entry name" value="Hemoglobin subunit beta"/>
    <property type="match status" value="1"/>
</dbReference>
<dbReference type="Gene3D" id="1.10.490.10">
    <property type="entry name" value="Globins"/>
    <property type="match status" value="1"/>
</dbReference>
<dbReference type="InterPro" id="IPR000971">
    <property type="entry name" value="Globin"/>
</dbReference>
<dbReference type="InterPro" id="IPR009050">
    <property type="entry name" value="Globin-like_sf"/>
</dbReference>
<dbReference type="InterPro" id="IPR012292">
    <property type="entry name" value="Globin/Proto"/>
</dbReference>
<dbReference type="InterPro" id="IPR002337">
    <property type="entry name" value="Hemoglobin_b"/>
</dbReference>
<dbReference type="InterPro" id="IPR050056">
    <property type="entry name" value="Hemoglobin_oxygen_transport"/>
</dbReference>
<dbReference type="PANTHER" id="PTHR11442">
    <property type="entry name" value="HEMOGLOBIN FAMILY MEMBER"/>
    <property type="match status" value="1"/>
</dbReference>
<dbReference type="PANTHER" id="PTHR11442:SF7">
    <property type="entry name" value="HEMOGLOBIN SUBUNIT EPSILON"/>
    <property type="match status" value="1"/>
</dbReference>
<dbReference type="Pfam" id="PF00042">
    <property type="entry name" value="Globin"/>
    <property type="match status" value="1"/>
</dbReference>
<dbReference type="PRINTS" id="PR00814">
    <property type="entry name" value="BETAHAEM"/>
</dbReference>
<dbReference type="SUPFAM" id="SSF46458">
    <property type="entry name" value="Globin-like"/>
    <property type="match status" value="1"/>
</dbReference>
<dbReference type="PROSITE" id="PS01033">
    <property type="entry name" value="GLOBIN"/>
    <property type="match status" value="1"/>
</dbReference>
<gene>
    <name type="primary">HBB</name>
</gene>
<proteinExistence type="evidence at protein level"/>
<evidence type="ECO:0000255" key="1">
    <source>
        <dbReference type="PROSITE-ProRule" id="PRU00238"/>
    </source>
</evidence>
<comment type="function">
    <text>Involved in oxygen transport from the lung to the various peripheral tissues.</text>
</comment>
<comment type="subunit">
    <text>Heterotetramer of two alpha chains and two beta chains.</text>
</comment>
<comment type="tissue specificity">
    <text>Red blood cells.</text>
</comment>
<comment type="similarity">
    <text evidence="1">Belongs to the globin family.</text>
</comment>
<reference key="1">
    <citation type="journal article" date="1982" name="Hoppe-Seyler's Z. Physiol. Chem.">
        <title>The amino acid sequence of Canada goose (Branta canadensis) and mute swan (Cygnus olor) hemoglobins. Two different species with identical beta-chains.</title>
        <authorList>
            <person name="Oberthur W."/>
            <person name="Godovac-Zimmermann J."/>
            <person name="Braunitzer G."/>
        </authorList>
    </citation>
    <scope>PROTEIN SEQUENCE</scope>
</reference>
<protein>
    <recommendedName>
        <fullName>Hemoglobin subunit beta</fullName>
    </recommendedName>
    <alternativeName>
        <fullName>Beta-globin</fullName>
    </alternativeName>
    <alternativeName>
        <fullName>Hemoglobin beta chain</fullName>
    </alternativeName>
</protein>
<keyword id="KW-0903">Direct protein sequencing</keyword>
<keyword id="KW-0349">Heme</keyword>
<keyword id="KW-0408">Iron</keyword>
<keyword id="KW-0479">Metal-binding</keyword>
<keyword id="KW-0561">Oxygen transport</keyword>
<keyword id="KW-0813">Transport</keyword>
<feature type="chain" id="PRO_0000052894" description="Hemoglobin subunit beta">
    <location>
        <begin position="1"/>
        <end position="146"/>
    </location>
</feature>
<feature type="domain" description="Globin" evidence="1">
    <location>
        <begin position="2"/>
        <end position="146"/>
    </location>
</feature>
<feature type="binding site" description="distal binding residue">
    <location>
        <position position="63"/>
    </location>
    <ligand>
        <name>heme b</name>
        <dbReference type="ChEBI" id="CHEBI:60344"/>
    </ligand>
    <ligandPart>
        <name>Fe</name>
        <dbReference type="ChEBI" id="CHEBI:18248"/>
    </ligandPart>
</feature>
<feature type="binding site" description="proximal binding residue">
    <location>
        <position position="92"/>
    </location>
    <ligand>
        <name>heme b</name>
        <dbReference type="ChEBI" id="CHEBI:60344"/>
    </ligand>
    <ligandPart>
        <name>Fe</name>
        <dbReference type="ChEBI" id="CHEBI:18248"/>
    </ligandPart>
</feature>
<sequence>VHWTAEEKQLITGLWGKVNVADCGAEALARLLIVYPWTQRFFSSFGNLSSPTAILGNPMVRAHGKKVLTSFGDAVKNLDNIKNTFAQLSELHCDKLHVDPENFRLLGDILIIVLAAHFAKDFTPDCQAAWQKLVRVVAHALARKYH</sequence>